<evidence type="ECO:0000256" key="1">
    <source>
        <dbReference type="SAM" id="MobiDB-lite"/>
    </source>
</evidence>
<sequence length="44" mass="4953">MYIFSYEFRKIGGGSNRNNYQLNSAPAFKSSQNTSTQAKPTFSN</sequence>
<reference key="1">
    <citation type="journal article" date="2005" name="Nature">
        <title>The genome of the social amoeba Dictyostelium discoideum.</title>
        <authorList>
            <person name="Eichinger L."/>
            <person name="Pachebat J.A."/>
            <person name="Gloeckner G."/>
            <person name="Rajandream M.A."/>
            <person name="Sucgang R."/>
            <person name="Berriman M."/>
            <person name="Song J."/>
            <person name="Olsen R."/>
            <person name="Szafranski K."/>
            <person name="Xu Q."/>
            <person name="Tunggal B."/>
            <person name="Kummerfeld S."/>
            <person name="Madera M."/>
            <person name="Konfortov B.A."/>
            <person name="Rivero F."/>
            <person name="Bankier A.T."/>
            <person name="Lehmann R."/>
            <person name="Hamlin N."/>
            <person name="Davies R."/>
            <person name="Gaudet P."/>
            <person name="Fey P."/>
            <person name="Pilcher K."/>
            <person name="Chen G."/>
            <person name="Saunders D."/>
            <person name="Sodergren E.J."/>
            <person name="Davis P."/>
            <person name="Kerhornou A."/>
            <person name="Nie X."/>
            <person name="Hall N."/>
            <person name="Anjard C."/>
            <person name="Hemphill L."/>
            <person name="Bason N."/>
            <person name="Farbrother P."/>
            <person name="Desany B."/>
            <person name="Just E."/>
            <person name="Morio T."/>
            <person name="Rost R."/>
            <person name="Churcher C.M."/>
            <person name="Cooper J."/>
            <person name="Haydock S."/>
            <person name="van Driessche N."/>
            <person name="Cronin A."/>
            <person name="Goodhead I."/>
            <person name="Muzny D.M."/>
            <person name="Mourier T."/>
            <person name="Pain A."/>
            <person name="Lu M."/>
            <person name="Harper D."/>
            <person name="Lindsay R."/>
            <person name="Hauser H."/>
            <person name="James K.D."/>
            <person name="Quiles M."/>
            <person name="Madan Babu M."/>
            <person name="Saito T."/>
            <person name="Buchrieser C."/>
            <person name="Wardroper A."/>
            <person name="Felder M."/>
            <person name="Thangavelu M."/>
            <person name="Johnson D."/>
            <person name="Knights A."/>
            <person name="Loulseged H."/>
            <person name="Mungall K.L."/>
            <person name="Oliver K."/>
            <person name="Price C."/>
            <person name="Quail M.A."/>
            <person name="Urushihara H."/>
            <person name="Hernandez J."/>
            <person name="Rabbinowitsch E."/>
            <person name="Steffen D."/>
            <person name="Sanders M."/>
            <person name="Ma J."/>
            <person name="Kohara Y."/>
            <person name="Sharp S."/>
            <person name="Simmonds M.N."/>
            <person name="Spiegler S."/>
            <person name="Tivey A."/>
            <person name="Sugano S."/>
            <person name="White B."/>
            <person name="Walker D."/>
            <person name="Woodward J.R."/>
            <person name="Winckler T."/>
            <person name="Tanaka Y."/>
            <person name="Shaulsky G."/>
            <person name="Schleicher M."/>
            <person name="Weinstock G.M."/>
            <person name="Rosenthal A."/>
            <person name="Cox E.C."/>
            <person name="Chisholm R.L."/>
            <person name="Gibbs R.A."/>
            <person name="Loomis W.F."/>
            <person name="Platzer M."/>
            <person name="Kay R.R."/>
            <person name="Williams J.G."/>
            <person name="Dear P.H."/>
            <person name="Noegel A.A."/>
            <person name="Barrell B.G."/>
            <person name="Kuspa A."/>
        </authorList>
    </citation>
    <scope>NUCLEOTIDE SEQUENCE [LARGE SCALE GENOMIC DNA]</scope>
    <source>
        <strain>AX4</strain>
    </source>
</reference>
<gene>
    <name type="ORF">DDB_G0288887</name>
</gene>
<name>Y8155_DICDI</name>
<proteinExistence type="predicted"/>
<protein>
    <recommendedName>
        <fullName>Uncharacterized protein DDB_G0288887</fullName>
    </recommendedName>
</protein>
<keyword id="KW-1185">Reference proteome</keyword>
<dbReference type="EMBL" id="AAFI02000126">
    <property type="protein sequence ID" value="EAL62967.1"/>
    <property type="molecule type" value="Genomic_DNA"/>
</dbReference>
<dbReference type="RefSeq" id="XP_636469.1">
    <property type="nucleotide sequence ID" value="XM_631377.1"/>
</dbReference>
<dbReference type="PaxDb" id="44689-DDB0302644"/>
<dbReference type="EnsemblProtists" id="EAL62967">
    <property type="protein sequence ID" value="EAL62967"/>
    <property type="gene ID" value="DDB_G0288887"/>
</dbReference>
<dbReference type="GeneID" id="8626852"/>
<dbReference type="KEGG" id="ddi:DDB_G0288887"/>
<dbReference type="dictyBase" id="DDB_G0288887"/>
<dbReference type="VEuPathDB" id="AmoebaDB:DDB_G0288887"/>
<dbReference type="HOGENOM" id="CLU_3225712_0_0_1"/>
<dbReference type="InParanoid" id="Q54IB0"/>
<dbReference type="PRO" id="PR:Q54IB0"/>
<dbReference type="Proteomes" id="UP000002195">
    <property type="component" value="Chromosome 5"/>
</dbReference>
<feature type="chain" id="PRO_0000346970" description="Uncharacterized protein DDB_G0288887">
    <location>
        <begin position="1"/>
        <end position="44"/>
    </location>
</feature>
<feature type="region of interest" description="Disordered" evidence="1">
    <location>
        <begin position="22"/>
        <end position="44"/>
    </location>
</feature>
<organism>
    <name type="scientific">Dictyostelium discoideum</name>
    <name type="common">Social amoeba</name>
    <dbReference type="NCBI Taxonomy" id="44689"/>
    <lineage>
        <taxon>Eukaryota</taxon>
        <taxon>Amoebozoa</taxon>
        <taxon>Evosea</taxon>
        <taxon>Eumycetozoa</taxon>
        <taxon>Dictyostelia</taxon>
        <taxon>Dictyosteliales</taxon>
        <taxon>Dictyosteliaceae</taxon>
        <taxon>Dictyostelium</taxon>
    </lineage>
</organism>
<accession>Q54IB0</accession>